<name>RS7_CHLAA</name>
<proteinExistence type="inferred from homology"/>
<feature type="chain" id="PRO_1000081274" description="Small ribosomal subunit protein uS7">
    <location>
        <begin position="1"/>
        <end position="157"/>
    </location>
</feature>
<dbReference type="EMBL" id="CP000909">
    <property type="protein sequence ID" value="ABY35573.1"/>
    <property type="molecule type" value="Genomic_DNA"/>
</dbReference>
<dbReference type="RefSeq" id="WP_012258227.1">
    <property type="nucleotide sequence ID" value="NC_010175.1"/>
</dbReference>
<dbReference type="RefSeq" id="YP_001635962.1">
    <property type="nucleotide sequence ID" value="NC_010175.1"/>
</dbReference>
<dbReference type="SMR" id="A9WH61"/>
<dbReference type="FunCoup" id="A9WH61">
    <property type="interactions" value="496"/>
</dbReference>
<dbReference type="STRING" id="324602.Caur_2364"/>
<dbReference type="EnsemblBacteria" id="ABY35573">
    <property type="protein sequence ID" value="ABY35573"/>
    <property type="gene ID" value="Caur_2364"/>
</dbReference>
<dbReference type="KEGG" id="cau:Caur_2364"/>
<dbReference type="PATRIC" id="fig|324602.8.peg.2677"/>
<dbReference type="eggNOG" id="COG0049">
    <property type="taxonomic scope" value="Bacteria"/>
</dbReference>
<dbReference type="HOGENOM" id="CLU_072226_1_1_0"/>
<dbReference type="InParanoid" id="A9WH61"/>
<dbReference type="Proteomes" id="UP000002008">
    <property type="component" value="Chromosome"/>
</dbReference>
<dbReference type="GO" id="GO:0022627">
    <property type="term" value="C:cytosolic small ribosomal subunit"/>
    <property type="evidence" value="ECO:0000318"/>
    <property type="project" value="GO_Central"/>
</dbReference>
<dbReference type="GO" id="GO:0005840">
    <property type="term" value="C:ribosome"/>
    <property type="evidence" value="ECO:0000318"/>
    <property type="project" value="GO_Central"/>
</dbReference>
<dbReference type="GO" id="GO:0003729">
    <property type="term" value="F:mRNA binding"/>
    <property type="evidence" value="ECO:0000318"/>
    <property type="project" value="GO_Central"/>
</dbReference>
<dbReference type="GO" id="GO:0019843">
    <property type="term" value="F:rRNA binding"/>
    <property type="evidence" value="ECO:0000318"/>
    <property type="project" value="GO_Central"/>
</dbReference>
<dbReference type="GO" id="GO:0003735">
    <property type="term" value="F:structural constituent of ribosome"/>
    <property type="evidence" value="ECO:0000318"/>
    <property type="project" value="GO_Central"/>
</dbReference>
<dbReference type="GO" id="GO:0000049">
    <property type="term" value="F:tRNA binding"/>
    <property type="evidence" value="ECO:0007669"/>
    <property type="project" value="UniProtKB-UniRule"/>
</dbReference>
<dbReference type="GO" id="GO:0000028">
    <property type="term" value="P:ribosomal small subunit assembly"/>
    <property type="evidence" value="ECO:0000318"/>
    <property type="project" value="GO_Central"/>
</dbReference>
<dbReference type="GO" id="GO:0006412">
    <property type="term" value="P:translation"/>
    <property type="evidence" value="ECO:0000318"/>
    <property type="project" value="GO_Central"/>
</dbReference>
<dbReference type="CDD" id="cd14869">
    <property type="entry name" value="uS7_Bacteria"/>
    <property type="match status" value="1"/>
</dbReference>
<dbReference type="FunFam" id="1.10.455.10:FF:000001">
    <property type="entry name" value="30S ribosomal protein S7"/>
    <property type="match status" value="1"/>
</dbReference>
<dbReference type="Gene3D" id="1.10.455.10">
    <property type="entry name" value="Ribosomal protein S7 domain"/>
    <property type="match status" value="1"/>
</dbReference>
<dbReference type="HAMAP" id="MF_00480_B">
    <property type="entry name" value="Ribosomal_uS7_B"/>
    <property type="match status" value="1"/>
</dbReference>
<dbReference type="InterPro" id="IPR000235">
    <property type="entry name" value="Ribosomal_uS7"/>
</dbReference>
<dbReference type="InterPro" id="IPR005717">
    <property type="entry name" value="Ribosomal_uS7_bac/org-type"/>
</dbReference>
<dbReference type="InterPro" id="IPR020606">
    <property type="entry name" value="Ribosomal_uS7_CS"/>
</dbReference>
<dbReference type="InterPro" id="IPR023798">
    <property type="entry name" value="Ribosomal_uS7_dom"/>
</dbReference>
<dbReference type="InterPro" id="IPR036823">
    <property type="entry name" value="Ribosomal_uS7_dom_sf"/>
</dbReference>
<dbReference type="NCBIfam" id="TIGR01029">
    <property type="entry name" value="rpsG_bact"/>
    <property type="match status" value="1"/>
</dbReference>
<dbReference type="PANTHER" id="PTHR11205">
    <property type="entry name" value="RIBOSOMAL PROTEIN S7"/>
    <property type="match status" value="1"/>
</dbReference>
<dbReference type="Pfam" id="PF00177">
    <property type="entry name" value="Ribosomal_S7"/>
    <property type="match status" value="1"/>
</dbReference>
<dbReference type="PIRSF" id="PIRSF002122">
    <property type="entry name" value="RPS7p_RPS7a_RPS5e_RPS7o"/>
    <property type="match status" value="1"/>
</dbReference>
<dbReference type="SUPFAM" id="SSF47973">
    <property type="entry name" value="Ribosomal protein S7"/>
    <property type="match status" value="1"/>
</dbReference>
<dbReference type="PROSITE" id="PS00052">
    <property type="entry name" value="RIBOSOMAL_S7"/>
    <property type="match status" value="1"/>
</dbReference>
<gene>
    <name evidence="1" type="primary">rpsG</name>
    <name type="ordered locus">Caur_2364</name>
</gene>
<evidence type="ECO:0000255" key="1">
    <source>
        <dbReference type="HAMAP-Rule" id="MF_00480"/>
    </source>
</evidence>
<evidence type="ECO:0000305" key="2"/>
<reference key="1">
    <citation type="journal article" date="2011" name="BMC Genomics">
        <title>Complete genome sequence of the filamentous anoxygenic phototrophic bacterium Chloroflexus aurantiacus.</title>
        <authorList>
            <person name="Tang K.H."/>
            <person name="Barry K."/>
            <person name="Chertkov O."/>
            <person name="Dalin E."/>
            <person name="Han C.S."/>
            <person name="Hauser L.J."/>
            <person name="Honchak B.M."/>
            <person name="Karbach L.E."/>
            <person name="Land M.L."/>
            <person name="Lapidus A."/>
            <person name="Larimer F.W."/>
            <person name="Mikhailova N."/>
            <person name="Pitluck S."/>
            <person name="Pierson B.K."/>
            <person name="Blankenship R.E."/>
        </authorList>
    </citation>
    <scope>NUCLEOTIDE SEQUENCE [LARGE SCALE GENOMIC DNA]</scope>
    <source>
        <strain>ATCC 29366 / DSM 635 / J-10-fl</strain>
    </source>
</reference>
<keyword id="KW-1185">Reference proteome</keyword>
<keyword id="KW-0687">Ribonucleoprotein</keyword>
<keyword id="KW-0689">Ribosomal protein</keyword>
<keyword id="KW-0694">RNA-binding</keyword>
<keyword id="KW-0699">rRNA-binding</keyword>
<keyword id="KW-0820">tRNA-binding</keyword>
<organism>
    <name type="scientific">Chloroflexus aurantiacus (strain ATCC 29366 / DSM 635 / J-10-fl)</name>
    <dbReference type="NCBI Taxonomy" id="324602"/>
    <lineage>
        <taxon>Bacteria</taxon>
        <taxon>Bacillati</taxon>
        <taxon>Chloroflexota</taxon>
        <taxon>Chloroflexia</taxon>
        <taxon>Chloroflexales</taxon>
        <taxon>Chloroflexineae</taxon>
        <taxon>Chloroflexaceae</taxon>
        <taxon>Chloroflexus</taxon>
    </lineage>
</organism>
<sequence>MPRRGNIERRPIPPDARYNSVLVQKFINKVMERGKKSLAERIVYQALDLAAERLKKPQMEIFEQALRNASPSIEVRPKRVGGATYQVPVEVKSDRRYSLAMRWLLMSARARTGKPMVERLAAELIDAYNNTGTTIKRKEDVHRMAEANRAFAHYGRL</sequence>
<comment type="function">
    <text evidence="1">One of the primary rRNA binding proteins, it binds directly to 16S rRNA where it nucleates assembly of the head domain of the 30S subunit. Is located at the subunit interface close to the decoding center, probably blocks exit of the E-site tRNA.</text>
</comment>
<comment type="subunit">
    <text evidence="1">Part of the 30S ribosomal subunit. Contacts proteins S9 and S11.</text>
</comment>
<comment type="similarity">
    <text evidence="1">Belongs to the universal ribosomal protein uS7 family.</text>
</comment>
<protein>
    <recommendedName>
        <fullName evidence="1">Small ribosomal subunit protein uS7</fullName>
    </recommendedName>
    <alternativeName>
        <fullName evidence="2">30S ribosomal protein S7</fullName>
    </alternativeName>
</protein>
<accession>A9WH61</accession>